<evidence type="ECO:0000250" key="1">
    <source>
        <dbReference type="UniProtKB" id="Q059U7"/>
    </source>
</evidence>
<evidence type="ECO:0000250" key="2">
    <source>
        <dbReference type="UniProtKB" id="Q2I0E5"/>
    </source>
</evidence>
<evidence type="ECO:0000250" key="3">
    <source>
        <dbReference type="UniProtKB" id="Q9ULD6"/>
    </source>
</evidence>
<evidence type="ECO:0000255" key="4">
    <source>
        <dbReference type="PROSITE-ProRule" id="PRU00143"/>
    </source>
</evidence>
<evidence type="ECO:0000256" key="5">
    <source>
        <dbReference type="SAM" id="MobiDB-lite"/>
    </source>
</evidence>
<evidence type="ECO:0000305" key="6"/>
<feature type="chain" id="PRO_0000416282" description="Protein inturned">
    <location>
        <begin position="1"/>
        <end position="933"/>
    </location>
</feature>
<feature type="domain" description="PDZ" evidence="4">
    <location>
        <begin position="186"/>
        <end position="264"/>
    </location>
</feature>
<feature type="region of interest" description="Disordered" evidence="5">
    <location>
        <begin position="1"/>
        <end position="54"/>
    </location>
</feature>
<feature type="region of interest" description="Disordered" evidence="5">
    <location>
        <begin position="703"/>
        <end position="742"/>
    </location>
</feature>
<feature type="compositionally biased region" description="Polar residues" evidence="5">
    <location>
        <begin position="37"/>
        <end position="48"/>
    </location>
</feature>
<feature type="compositionally biased region" description="Low complexity" evidence="5">
    <location>
        <begin position="710"/>
        <end position="719"/>
    </location>
</feature>
<feature type="compositionally biased region" description="Polar residues" evidence="5">
    <location>
        <begin position="729"/>
        <end position="738"/>
    </location>
</feature>
<feature type="modified residue" description="Phosphoserine" evidence="3">
    <location>
        <position position="675"/>
    </location>
</feature>
<keyword id="KW-0966">Cell projection</keyword>
<keyword id="KW-0970">Cilium biogenesis/degradation</keyword>
<keyword id="KW-0963">Cytoplasm</keyword>
<keyword id="KW-0206">Cytoskeleton</keyword>
<keyword id="KW-0217">Developmental protein</keyword>
<keyword id="KW-0597">Phosphoprotein</keyword>
<keyword id="KW-1185">Reference proteome</keyword>
<comment type="function">
    <text evidence="1 2">Plays a key role in ciliogenesis and embryonic development. Regulator of cilia formation by controlling the organization of the apical actin cytoskeleton and the positioning of the basal bodies at the apical cell surface, which in turn is essential for the normal orientation of elongating ciliary microtubules. Plays a key role in definition of cell polarity via its role in ciliogenesis but not via conversion extension. Has an indirect effect on hedgehog signaling (By similarity). Proposed to function as core component of the CPLANE (ciliogenesis and planar polarity effectors) complex involved in the recruitment of peripheral IFT-A proteins to basal bodies. Required for recruitment of CPLANE2 to the mother centriole. Binds phosphatidylinositol 3-phosphate with highest affinity, followed by phosphatidylinositol 4-phosphate and phosphatidylinositol 5-phosphate (By similarity).</text>
</comment>
<comment type="subunit">
    <text evidence="1 3">Component of the CPLANE (ciliogenesis and planar polarity effectors) complex, composed of INTU, FUZ and WDPCP. Interacts with CPLANE1. Interacts with NPHP4 and DAAM1; INTU is mediating the interaction between NPHP4 and DAAM1.</text>
</comment>
<comment type="subcellular location">
    <subcellularLocation>
        <location evidence="1">Cytoplasm</location>
    </subcellularLocation>
    <subcellularLocation>
        <location evidence="2">Cell surface</location>
    </subcellularLocation>
    <subcellularLocation>
        <location evidence="2">Cytoplasm</location>
        <location evidence="2">Cytoskeleton</location>
        <location evidence="2">Cilium basal body</location>
    </subcellularLocation>
    <subcellularLocation>
        <location evidence="1">Cytoplasm</location>
        <location evidence="1">Cytoskeleton</location>
        <location evidence="1">Microtubule organizing center</location>
        <location evidence="1">Centrosome</location>
        <location evidence="1">Centriole</location>
    </subcellularLocation>
    <text evidence="1 2">Enriched at the apical surface in ciliated cells. Localizes at the transition zone, a region between the basal body and the ciliary axoneme. Recruited to the centriole in a TTBK2-dependent manner.</text>
</comment>
<comment type="similarity">
    <text evidence="6">Belongs to the inturned family.</text>
</comment>
<name>INTU_BOVIN</name>
<gene>
    <name type="primary">INTU</name>
    <name type="synonym">PDZD6</name>
</gene>
<reference key="1">
    <citation type="journal article" date="2009" name="Genome Biol.">
        <title>A whole-genome assembly of the domestic cow, Bos taurus.</title>
        <authorList>
            <person name="Zimin A.V."/>
            <person name="Delcher A.L."/>
            <person name="Florea L."/>
            <person name="Kelley D.R."/>
            <person name="Schatz M.C."/>
            <person name="Puiu D."/>
            <person name="Hanrahan F."/>
            <person name="Pertea G."/>
            <person name="Van Tassell C.P."/>
            <person name="Sonstegard T.S."/>
            <person name="Marcais G."/>
            <person name="Roberts M."/>
            <person name="Subramanian P."/>
            <person name="Yorke J.A."/>
            <person name="Salzberg S.L."/>
        </authorList>
    </citation>
    <scope>NUCLEOTIDE SEQUENCE [LARGE SCALE GENOMIC DNA]</scope>
    <source>
        <strain>Hereford</strain>
    </source>
</reference>
<accession>F1MDL2</accession>
<organism>
    <name type="scientific">Bos taurus</name>
    <name type="common">Bovine</name>
    <dbReference type="NCBI Taxonomy" id="9913"/>
    <lineage>
        <taxon>Eukaryota</taxon>
        <taxon>Metazoa</taxon>
        <taxon>Chordata</taxon>
        <taxon>Craniata</taxon>
        <taxon>Vertebrata</taxon>
        <taxon>Euteleostomi</taxon>
        <taxon>Mammalia</taxon>
        <taxon>Eutheria</taxon>
        <taxon>Laurasiatheria</taxon>
        <taxon>Artiodactyla</taxon>
        <taxon>Ruminantia</taxon>
        <taxon>Pecora</taxon>
        <taxon>Bovidae</taxon>
        <taxon>Bovinae</taxon>
        <taxon>Bos</taxon>
    </lineage>
</organism>
<proteinExistence type="inferred from homology"/>
<protein>
    <recommendedName>
        <fullName>Protein inturned</fullName>
    </recommendedName>
    <alternativeName>
        <fullName>Inturned planar cell polarity effector homolog</fullName>
    </alternativeName>
    <alternativeName>
        <fullName>PDZ domain-containing protein 6</fullName>
    </alternativeName>
</protein>
<sequence>MASLPLCGSVRSPEGLPGDPSSQEDRQDYDPEDPVSGSGSYSPTSTDSNDLEPEWLDSVQKNGELFYLELSEDEEESLLPETPTVNHVRFSENEIIIEEDDYREGKKYEPKLKRFTKILKSKKLLPKRYNKKNSNASGPVSILKHQSNQKMGVIVQQRHKDVNIYVNPKKLTVTKAKEQLKLLEVLVGIIHQTKWSWRRTGKQGGGERLVVHGLLPGGSAMKSGQVLIGDVLVAVNDVEVTSENIERVLSCIPGPMQVKLTFENAYAMKKETTQPRQKKAQLNTSDLVKLLWGEEVEGIQQNILNTPHIVMYLTLQLDSETSKEEQEILYHYPVSEASQKLQSVRGIFLTLCDMLENVTGTQVTSSSLLLNRKQIHIAYWKETDKLLLIGLPAEEVPLPQLRNMIEDVAQTLKFMYGSLDSAFCQVENVPRLDHFFSLFFQRALQPTKLHSSASPSTQQYDASSAVLLDNLPGVRWLTLPQEIKLELDTALSDLEAADFAELSEDYYDMRRLYTILGSSLFYKGYLICSHLPKDDLIDIAVYCRHYCLLPLAAKQRIGQLVIWREVFPRHHLQPSADSNTEVFQEPEGRYFLLIVGLRHYMLCVLLEAGGCASRAIGNPGPDCIYVDQVKTTLHQLEGVDSRINERLASSPTPCLSCADWFLAGSHEKLDNLTTSPILSRLHGASRVATSPTCRRTLFSDYSLKTRKPSPSRSGGPDSGLEGEGVGLSPHTTESQGSHGSEETGALLKVTKKKSALPNPFHLGNLKKDLSEKELDIYNTVKLTSGPENTLFHYVALETVQGIFITPTHEEVAQLSGSIHPQLIKNFHQCCLSIRAVFQQTVAKEKKKALNGKDHSGSTNSVSSLNPVKEHGVLFECSPENWTDQRKAPPVMAYWVVGRLFLHPKLQELYVCFHDSVTEIAIEMAFKLFFGLTL</sequence>
<dbReference type="EMBL" id="DAAA02044649">
    <property type="status" value="NOT_ANNOTATED_CDS"/>
    <property type="molecule type" value="Genomic_DNA"/>
</dbReference>
<dbReference type="RefSeq" id="NP_001192784.1">
    <property type="nucleotide sequence ID" value="NM_001205855.1"/>
</dbReference>
<dbReference type="SMR" id="F1MDL2"/>
<dbReference type="FunCoup" id="F1MDL2">
    <property type="interactions" value="849"/>
</dbReference>
<dbReference type="STRING" id="9913.ENSBTAP00000017038"/>
<dbReference type="PaxDb" id="9913-ENSBTAP00000017038"/>
<dbReference type="GeneID" id="519372"/>
<dbReference type="KEGG" id="bta:519372"/>
<dbReference type="CTD" id="27152"/>
<dbReference type="VEuPathDB" id="HostDB:ENSBTAG00000012824"/>
<dbReference type="eggNOG" id="ENOG502QQJQ">
    <property type="taxonomic scope" value="Eukaryota"/>
</dbReference>
<dbReference type="HOGENOM" id="CLU_014223_0_1_1"/>
<dbReference type="InParanoid" id="F1MDL2"/>
<dbReference type="OMA" id="CAGKSIS"/>
<dbReference type="OrthoDB" id="10038586at2759"/>
<dbReference type="TreeFam" id="TF323932"/>
<dbReference type="Reactome" id="R-BTA-5610787">
    <property type="pathway name" value="Hedgehog 'off' state"/>
</dbReference>
<dbReference type="Proteomes" id="UP000009136">
    <property type="component" value="Chromosome 17"/>
</dbReference>
<dbReference type="Bgee" id="ENSBTAG00000012824">
    <property type="expression patterns" value="Expressed in semen and 89 other cell types or tissues"/>
</dbReference>
<dbReference type="GO" id="GO:0009986">
    <property type="term" value="C:cell surface"/>
    <property type="evidence" value="ECO:0007669"/>
    <property type="project" value="UniProtKB-SubCell"/>
</dbReference>
<dbReference type="GO" id="GO:0005814">
    <property type="term" value="C:centriole"/>
    <property type="evidence" value="ECO:0007669"/>
    <property type="project" value="UniProtKB-SubCell"/>
</dbReference>
<dbReference type="GO" id="GO:0005929">
    <property type="term" value="C:cilium"/>
    <property type="evidence" value="ECO:0000318"/>
    <property type="project" value="GO_Central"/>
</dbReference>
<dbReference type="GO" id="GO:0005737">
    <property type="term" value="C:cytoplasm"/>
    <property type="evidence" value="ECO:0000250"/>
    <property type="project" value="UniProtKB"/>
</dbReference>
<dbReference type="GO" id="GO:0035091">
    <property type="term" value="F:phosphatidylinositol binding"/>
    <property type="evidence" value="ECO:0000250"/>
    <property type="project" value="UniProtKB"/>
</dbReference>
<dbReference type="GO" id="GO:0060271">
    <property type="term" value="P:cilium assembly"/>
    <property type="evidence" value="ECO:0000250"/>
    <property type="project" value="UniProtKB"/>
</dbReference>
<dbReference type="GO" id="GO:0001736">
    <property type="term" value="P:establishment of planar polarity"/>
    <property type="evidence" value="ECO:0007669"/>
    <property type="project" value="InterPro"/>
</dbReference>
<dbReference type="GO" id="GO:0060173">
    <property type="term" value="P:limb development"/>
    <property type="evidence" value="ECO:0000250"/>
    <property type="project" value="UniProtKB"/>
</dbReference>
<dbReference type="GO" id="GO:0007399">
    <property type="term" value="P:nervous system development"/>
    <property type="evidence" value="ECO:0000250"/>
    <property type="project" value="UniProtKB"/>
</dbReference>
<dbReference type="GO" id="GO:0008589">
    <property type="term" value="P:regulation of smoothened signaling pathway"/>
    <property type="evidence" value="ECO:0000250"/>
    <property type="project" value="UniProtKB"/>
</dbReference>
<dbReference type="GO" id="GO:0016192">
    <property type="term" value="P:vesicle-mediated transport"/>
    <property type="evidence" value="ECO:0007669"/>
    <property type="project" value="InterPro"/>
</dbReference>
<dbReference type="Gene3D" id="2.30.42.10">
    <property type="match status" value="1"/>
</dbReference>
<dbReference type="InterPro" id="IPR043987">
    <property type="entry name" value="CCZ1/INTU/HSP4_longin_1"/>
</dbReference>
<dbReference type="InterPro" id="IPR043989">
    <property type="entry name" value="CCZ1/INTU/HSP4_longin_3"/>
</dbReference>
<dbReference type="InterPro" id="IPR043988">
    <property type="entry name" value="CCZ1/INTU_longin_2"/>
</dbReference>
<dbReference type="InterPro" id="IPR039151">
    <property type="entry name" value="INTU"/>
</dbReference>
<dbReference type="InterPro" id="IPR001478">
    <property type="entry name" value="PDZ"/>
</dbReference>
<dbReference type="InterPro" id="IPR036034">
    <property type="entry name" value="PDZ_sf"/>
</dbReference>
<dbReference type="PANTHER" id="PTHR21082">
    <property type="entry name" value="PROTEIN INTURNED"/>
    <property type="match status" value="1"/>
</dbReference>
<dbReference type="PANTHER" id="PTHR21082:SF4">
    <property type="entry name" value="PROTEIN INTURNED"/>
    <property type="match status" value="1"/>
</dbReference>
<dbReference type="Pfam" id="PF19031">
    <property type="entry name" value="Intu_longin_1"/>
    <property type="match status" value="1"/>
</dbReference>
<dbReference type="Pfam" id="PF19032">
    <property type="entry name" value="Intu_longin_2"/>
    <property type="match status" value="1"/>
</dbReference>
<dbReference type="Pfam" id="PF19033">
    <property type="entry name" value="Intu_longin_3"/>
    <property type="match status" value="1"/>
</dbReference>
<dbReference type="SUPFAM" id="SSF50156">
    <property type="entry name" value="PDZ domain-like"/>
    <property type="match status" value="1"/>
</dbReference>
<dbReference type="PROSITE" id="PS50106">
    <property type="entry name" value="PDZ"/>
    <property type="match status" value="1"/>
</dbReference>